<protein>
    <recommendedName>
        <fullName>Putative S-adenosyl-L-methionine-dependent methyltransferase SCO6443</fullName>
        <ecNumber>2.1.1.-</ecNumber>
    </recommendedName>
</protein>
<name>Y6443_STRCO</name>
<accession>Q9ZBH0</accession>
<dbReference type="EC" id="2.1.1.-"/>
<dbReference type="EMBL" id="AL939127">
    <property type="protein sequence ID" value="CAA22752.1"/>
    <property type="molecule type" value="Genomic_DNA"/>
</dbReference>
<dbReference type="PIR" id="T35930">
    <property type="entry name" value="T35930"/>
</dbReference>
<dbReference type="RefSeq" id="NP_630528.1">
    <property type="nucleotide sequence ID" value="NC_003888.3"/>
</dbReference>
<dbReference type="RefSeq" id="WP_011030923.1">
    <property type="nucleotide sequence ID" value="NZ_VNID01000002.1"/>
</dbReference>
<dbReference type="SMR" id="Q9ZBH0"/>
<dbReference type="FunCoup" id="Q9ZBH0">
    <property type="interactions" value="1"/>
</dbReference>
<dbReference type="STRING" id="100226.gene:17764100"/>
<dbReference type="PaxDb" id="100226-SCO6443"/>
<dbReference type="KEGG" id="sco:SCO6443"/>
<dbReference type="PATRIC" id="fig|100226.15.peg.6543"/>
<dbReference type="eggNOG" id="COG3315">
    <property type="taxonomic scope" value="Bacteria"/>
</dbReference>
<dbReference type="HOGENOM" id="CLU_056160_2_0_11"/>
<dbReference type="InParanoid" id="Q9ZBH0"/>
<dbReference type="OrthoDB" id="9806164at2"/>
<dbReference type="PhylomeDB" id="Q9ZBH0"/>
<dbReference type="Proteomes" id="UP000001973">
    <property type="component" value="Chromosome"/>
</dbReference>
<dbReference type="GO" id="GO:0008168">
    <property type="term" value="F:methyltransferase activity"/>
    <property type="evidence" value="ECO:0007669"/>
    <property type="project" value="UniProtKB-KW"/>
</dbReference>
<dbReference type="GO" id="GO:0032259">
    <property type="term" value="P:methylation"/>
    <property type="evidence" value="ECO:0007669"/>
    <property type="project" value="UniProtKB-KW"/>
</dbReference>
<dbReference type="Gene3D" id="3.40.50.150">
    <property type="entry name" value="Vaccinia Virus protein VP39"/>
    <property type="match status" value="1"/>
</dbReference>
<dbReference type="InterPro" id="IPR007213">
    <property type="entry name" value="Ppm1/Ppm2/Tcmp"/>
</dbReference>
<dbReference type="InterPro" id="IPR029063">
    <property type="entry name" value="SAM-dependent_MTases_sf"/>
</dbReference>
<dbReference type="InterPro" id="IPR011610">
    <property type="entry name" value="SAM_mthyl_Trfase_ML2640-like"/>
</dbReference>
<dbReference type="NCBIfam" id="TIGR00027">
    <property type="entry name" value="mthyl_TIGR00027"/>
    <property type="match status" value="1"/>
</dbReference>
<dbReference type="PANTHER" id="PTHR43619">
    <property type="entry name" value="S-ADENOSYL-L-METHIONINE-DEPENDENT METHYLTRANSFERASE YKTD-RELATED"/>
    <property type="match status" value="1"/>
</dbReference>
<dbReference type="PANTHER" id="PTHR43619:SF2">
    <property type="entry name" value="S-ADENOSYL-L-METHIONINE-DEPENDENT METHYLTRANSFERASES SUPERFAMILY PROTEIN"/>
    <property type="match status" value="1"/>
</dbReference>
<dbReference type="Pfam" id="PF04072">
    <property type="entry name" value="LCM"/>
    <property type="match status" value="1"/>
</dbReference>
<dbReference type="SUPFAM" id="SSF53335">
    <property type="entry name" value="S-adenosyl-L-methionine-dependent methyltransferases"/>
    <property type="match status" value="1"/>
</dbReference>
<proteinExistence type="inferred from homology"/>
<evidence type="ECO:0000250" key="1"/>
<evidence type="ECO:0000305" key="2"/>
<keyword id="KW-0489">Methyltransferase</keyword>
<keyword id="KW-1185">Reference proteome</keyword>
<keyword id="KW-0949">S-adenosyl-L-methionine</keyword>
<keyword id="KW-0808">Transferase</keyword>
<reference key="1">
    <citation type="journal article" date="2002" name="Nature">
        <title>Complete genome sequence of the model actinomycete Streptomyces coelicolor A3(2).</title>
        <authorList>
            <person name="Bentley S.D."/>
            <person name="Chater K.F."/>
            <person name="Cerdeno-Tarraga A.-M."/>
            <person name="Challis G.L."/>
            <person name="Thomson N.R."/>
            <person name="James K.D."/>
            <person name="Harris D.E."/>
            <person name="Quail M.A."/>
            <person name="Kieser H."/>
            <person name="Harper D."/>
            <person name="Bateman A."/>
            <person name="Brown S."/>
            <person name="Chandra G."/>
            <person name="Chen C.W."/>
            <person name="Collins M."/>
            <person name="Cronin A."/>
            <person name="Fraser A."/>
            <person name="Goble A."/>
            <person name="Hidalgo J."/>
            <person name="Hornsby T."/>
            <person name="Howarth S."/>
            <person name="Huang C.-H."/>
            <person name="Kieser T."/>
            <person name="Larke L."/>
            <person name="Murphy L.D."/>
            <person name="Oliver K."/>
            <person name="O'Neil S."/>
            <person name="Rabbinowitsch E."/>
            <person name="Rajandream M.A."/>
            <person name="Rutherford K.M."/>
            <person name="Rutter S."/>
            <person name="Seeger K."/>
            <person name="Saunders D."/>
            <person name="Sharp S."/>
            <person name="Squares R."/>
            <person name="Squares S."/>
            <person name="Taylor K."/>
            <person name="Warren T."/>
            <person name="Wietzorrek A."/>
            <person name="Woodward J.R."/>
            <person name="Barrell B.G."/>
            <person name="Parkhill J."/>
            <person name="Hopwood D.A."/>
        </authorList>
    </citation>
    <scope>NUCLEOTIDE SEQUENCE [LARGE SCALE GENOMIC DNA]</scope>
    <source>
        <strain>ATCC BAA-471 / A3(2) / M145</strain>
    </source>
</reference>
<sequence length="303" mass="33235">MADTAPLGTRTDGVEGGVGLTALLVAAARAIETHRPDALAQDIYAEHFVLGARASAHWPVRLDRAPGGDTSPLWGRFARYFGLRTRVLDDFLLRSVRSAGIRQVVLLGAGLDARAFRLDWLSDCVIFEIDRDGVLAFKHRVLDTLSAEPGARRVPIGTDLRADWAGALTATGFDATAPTAWLVEGLLFYLPHAAETALIDTVDRLSAPGSALAYEVKLEKDLMAYRDSPLYVSTRRQLGIDLLDLFSREPRPDSAARLRDRGWTASVHTPFDFTRRHGRGPLPEENDALAGNRWVFADRARPA</sequence>
<organism>
    <name type="scientific">Streptomyces coelicolor (strain ATCC BAA-471 / A3(2) / M145)</name>
    <dbReference type="NCBI Taxonomy" id="100226"/>
    <lineage>
        <taxon>Bacteria</taxon>
        <taxon>Bacillati</taxon>
        <taxon>Actinomycetota</taxon>
        <taxon>Actinomycetes</taxon>
        <taxon>Kitasatosporales</taxon>
        <taxon>Streptomycetaceae</taxon>
        <taxon>Streptomyces</taxon>
        <taxon>Streptomyces albidoflavus group</taxon>
    </lineage>
</organism>
<gene>
    <name type="ordered locus">SCO6443</name>
    <name type="ORF">SC9B5.10</name>
</gene>
<comment type="function">
    <text evidence="1">Exhibits S-adenosyl-L-methionine-dependent methyltransferase activity.</text>
</comment>
<comment type="similarity">
    <text evidence="2">Belongs to the UPF0677 family.</text>
</comment>
<feature type="chain" id="PRO_0000361265" description="Putative S-adenosyl-L-methionine-dependent methyltransferase SCO6443">
    <location>
        <begin position="1"/>
        <end position="303"/>
    </location>
</feature>
<feature type="binding site" evidence="1">
    <location>
        <position position="130"/>
    </location>
    <ligand>
        <name>S-adenosyl-L-methionine</name>
        <dbReference type="ChEBI" id="CHEBI:59789"/>
    </ligand>
</feature>
<feature type="binding site" evidence="1">
    <location>
        <begin position="159"/>
        <end position="160"/>
    </location>
    <ligand>
        <name>S-adenosyl-L-methionine</name>
        <dbReference type="ChEBI" id="CHEBI:59789"/>
    </ligand>
</feature>